<comment type="function">
    <text evidence="1">Acts as a chaperone.</text>
</comment>
<comment type="induction">
    <text evidence="1">By stress conditions e.g. heat shock.</text>
</comment>
<comment type="similarity">
    <text evidence="1">Belongs to the heat shock protein 70 family.</text>
</comment>
<evidence type="ECO:0000255" key="1">
    <source>
        <dbReference type="HAMAP-Rule" id="MF_00332"/>
    </source>
</evidence>
<evidence type="ECO:0000256" key="2">
    <source>
        <dbReference type="SAM" id="MobiDB-lite"/>
    </source>
</evidence>
<organism>
    <name type="scientific">Streptococcus pyogenes serotype M4 (strain MGAS10750)</name>
    <dbReference type="NCBI Taxonomy" id="370554"/>
    <lineage>
        <taxon>Bacteria</taxon>
        <taxon>Bacillati</taxon>
        <taxon>Bacillota</taxon>
        <taxon>Bacilli</taxon>
        <taxon>Lactobacillales</taxon>
        <taxon>Streptococcaceae</taxon>
        <taxon>Streptococcus</taxon>
    </lineage>
</organism>
<gene>
    <name evidence="1" type="primary">dnaK</name>
    <name type="ordered locus">MGAS10750_Spy1558</name>
</gene>
<dbReference type="EMBL" id="CP000262">
    <property type="protein sequence ID" value="ABF38508.1"/>
    <property type="molecule type" value="Genomic_DNA"/>
</dbReference>
<dbReference type="SMR" id="Q1J578"/>
<dbReference type="KEGG" id="spi:MGAS10750_Spy1558"/>
<dbReference type="HOGENOM" id="CLU_005965_2_4_9"/>
<dbReference type="Proteomes" id="UP000002434">
    <property type="component" value="Chromosome"/>
</dbReference>
<dbReference type="GO" id="GO:0005524">
    <property type="term" value="F:ATP binding"/>
    <property type="evidence" value="ECO:0007669"/>
    <property type="project" value="UniProtKB-UniRule"/>
</dbReference>
<dbReference type="GO" id="GO:0140662">
    <property type="term" value="F:ATP-dependent protein folding chaperone"/>
    <property type="evidence" value="ECO:0007669"/>
    <property type="project" value="InterPro"/>
</dbReference>
<dbReference type="GO" id="GO:0051082">
    <property type="term" value="F:unfolded protein binding"/>
    <property type="evidence" value="ECO:0007669"/>
    <property type="project" value="InterPro"/>
</dbReference>
<dbReference type="CDD" id="cd10234">
    <property type="entry name" value="ASKHA_NBD_HSP70_DnaK-like"/>
    <property type="match status" value="1"/>
</dbReference>
<dbReference type="FunFam" id="2.60.34.10:FF:000014">
    <property type="entry name" value="Chaperone protein DnaK HSP70"/>
    <property type="match status" value="1"/>
</dbReference>
<dbReference type="FunFam" id="3.30.420.40:FF:000071">
    <property type="entry name" value="Molecular chaperone DnaK"/>
    <property type="match status" value="1"/>
</dbReference>
<dbReference type="FunFam" id="3.90.640.10:FF:000003">
    <property type="entry name" value="Molecular chaperone DnaK"/>
    <property type="match status" value="1"/>
</dbReference>
<dbReference type="Gene3D" id="1.20.1270.10">
    <property type="match status" value="1"/>
</dbReference>
<dbReference type="Gene3D" id="3.30.420.40">
    <property type="match status" value="2"/>
</dbReference>
<dbReference type="Gene3D" id="3.90.640.10">
    <property type="entry name" value="Actin, Chain A, domain 4"/>
    <property type="match status" value="1"/>
</dbReference>
<dbReference type="Gene3D" id="2.60.34.10">
    <property type="entry name" value="Substrate Binding Domain Of DNAk, Chain A, domain 1"/>
    <property type="match status" value="1"/>
</dbReference>
<dbReference type="HAMAP" id="MF_00332">
    <property type="entry name" value="DnaK"/>
    <property type="match status" value="1"/>
</dbReference>
<dbReference type="InterPro" id="IPR043129">
    <property type="entry name" value="ATPase_NBD"/>
</dbReference>
<dbReference type="InterPro" id="IPR012725">
    <property type="entry name" value="Chaperone_DnaK"/>
</dbReference>
<dbReference type="InterPro" id="IPR018181">
    <property type="entry name" value="Heat_shock_70_CS"/>
</dbReference>
<dbReference type="InterPro" id="IPR029048">
    <property type="entry name" value="HSP70_C_sf"/>
</dbReference>
<dbReference type="InterPro" id="IPR029047">
    <property type="entry name" value="HSP70_peptide-bd_sf"/>
</dbReference>
<dbReference type="InterPro" id="IPR013126">
    <property type="entry name" value="Hsp_70_fam"/>
</dbReference>
<dbReference type="NCBIfam" id="NF001413">
    <property type="entry name" value="PRK00290.1"/>
    <property type="match status" value="1"/>
</dbReference>
<dbReference type="NCBIfam" id="TIGR02350">
    <property type="entry name" value="prok_dnaK"/>
    <property type="match status" value="1"/>
</dbReference>
<dbReference type="PANTHER" id="PTHR19375">
    <property type="entry name" value="HEAT SHOCK PROTEIN 70KDA"/>
    <property type="match status" value="1"/>
</dbReference>
<dbReference type="Pfam" id="PF00012">
    <property type="entry name" value="HSP70"/>
    <property type="match status" value="1"/>
</dbReference>
<dbReference type="PRINTS" id="PR00301">
    <property type="entry name" value="HEATSHOCK70"/>
</dbReference>
<dbReference type="SUPFAM" id="SSF53067">
    <property type="entry name" value="Actin-like ATPase domain"/>
    <property type="match status" value="2"/>
</dbReference>
<dbReference type="SUPFAM" id="SSF100934">
    <property type="entry name" value="Heat shock protein 70kD (HSP70), C-terminal subdomain"/>
    <property type="match status" value="1"/>
</dbReference>
<dbReference type="SUPFAM" id="SSF100920">
    <property type="entry name" value="Heat shock protein 70kD (HSP70), peptide-binding domain"/>
    <property type="match status" value="1"/>
</dbReference>
<dbReference type="PROSITE" id="PS00297">
    <property type="entry name" value="HSP70_1"/>
    <property type="match status" value="1"/>
</dbReference>
<dbReference type="PROSITE" id="PS00329">
    <property type="entry name" value="HSP70_2"/>
    <property type="match status" value="1"/>
</dbReference>
<dbReference type="PROSITE" id="PS01036">
    <property type="entry name" value="HSP70_3"/>
    <property type="match status" value="1"/>
</dbReference>
<proteinExistence type="inferred from homology"/>
<keyword id="KW-0067">ATP-binding</keyword>
<keyword id="KW-0143">Chaperone</keyword>
<keyword id="KW-0547">Nucleotide-binding</keyword>
<keyword id="KW-0597">Phosphoprotein</keyword>
<keyword id="KW-0346">Stress response</keyword>
<reference key="1">
    <citation type="journal article" date="2006" name="Proc. Natl. Acad. Sci. U.S.A.">
        <title>Molecular genetic anatomy of inter- and intraserotype variation in the human bacterial pathogen group A Streptococcus.</title>
        <authorList>
            <person name="Beres S.B."/>
            <person name="Richter E.W."/>
            <person name="Nagiec M.J."/>
            <person name="Sumby P."/>
            <person name="Porcella S.F."/>
            <person name="DeLeo F.R."/>
            <person name="Musser J.M."/>
        </authorList>
    </citation>
    <scope>NUCLEOTIDE SEQUENCE [LARGE SCALE GENOMIC DNA]</scope>
    <source>
        <strain>MGAS10750</strain>
    </source>
</reference>
<feature type="chain" id="PRO_1000059683" description="Chaperone protein DnaK">
    <location>
        <begin position="1"/>
        <end position="608"/>
    </location>
</feature>
<feature type="region of interest" description="Disordered" evidence="2">
    <location>
        <begin position="578"/>
        <end position="608"/>
    </location>
</feature>
<feature type="compositionally biased region" description="Low complexity" evidence="2">
    <location>
        <begin position="578"/>
        <end position="598"/>
    </location>
</feature>
<feature type="compositionally biased region" description="Acidic residues" evidence="2">
    <location>
        <begin position="599"/>
        <end position="608"/>
    </location>
</feature>
<feature type="modified residue" description="Phosphothreonine; by autocatalysis" evidence="1">
    <location>
        <position position="173"/>
    </location>
</feature>
<protein>
    <recommendedName>
        <fullName evidence="1">Chaperone protein DnaK</fullName>
    </recommendedName>
    <alternativeName>
        <fullName evidence="1">HSP70</fullName>
    </alternativeName>
    <alternativeName>
        <fullName evidence="1">Heat shock 70 kDa protein</fullName>
    </alternativeName>
    <alternativeName>
        <fullName evidence="1">Heat shock protein 70</fullName>
    </alternativeName>
</protein>
<sequence>MSKIIGIDLGTTNSAVAVLEGTESKIIANPEGNRTTPSVVSFKNGEIIVGDAAKRQAVTNPETVISIKSKMGTSEKVSANGKEYTPQEISAMILQYLKGYAEDYLGEKVEKAVITVPAYFNDAQRQATKDAGKIAGLEVERIVNEPTAAALAYGMDKTDKDEKILVFDLGGGTFDVSILELGDGVFDVLATAGDNKLGGDDFDQKIIDFLVAEFKKENGIDLSQDKMALQRLKDAAEKAKKDLSGVTQTQISLPFITAGSAGPLHLEMSLSRAKFDDLTRDLVERTKTPVRQALSDAGLSLSEIDEVILVGGSTRIPAVVEAVKAETGKEPNKSVNPDEVVAMGAAIQGGVITGDVKDVVLLDVTPLSLGIETMGGVFTKLIDRNTTIPTSKSQVFSTAADNQPAVDIHVLQGERPMAADNKTLGRFQLTDIPAAPRGIPQIEVTFDIDKNGIVSVKAKDLGTQKEQHIVIKSNDGLSEEEIDRMMKDAEANAEADAKRKEEVDLKNEVDQAIFATEKTIKETEGKGFDTERDAAQSALDELKAAQESGNLDDMKAKLEALNEKAQALAVKMYEQAAAAQQAAQGAEGAQANDSANNDDVVDGEFTEK</sequence>
<name>DNAK_STRPF</name>
<accession>Q1J578</accession>